<dbReference type="EMBL" id="Z97337">
    <property type="status" value="NOT_ANNOTATED_CDS"/>
    <property type="molecule type" value="Genomic_DNA"/>
</dbReference>
<dbReference type="EMBL" id="AL161540">
    <property type="status" value="NOT_ANNOTATED_CDS"/>
    <property type="molecule type" value="Genomic_DNA"/>
</dbReference>
<dbReference type="EMBL" id="CP002687">
    <property type="protein sequence ID" value="AEE83498.1"/>
    <property type="molecule type" value="Genomic_DNA"/>
</dbReference>
<dbReference type="RefSeq" id="NP_001031643.1">
    <property type="nucleotide sequence ID" value="NM_001036566.2"/>
</dbReference>
<dbReference type="STRING" id="3702.P82642"/>
<dbReference type="PaxDb" id="3702-AT4G14785.1"/>
<dbReference type="ProteomicsDB" id="224572"/>
<dbReference type="EnsemblPlants" id="AT4G14785.1">
    <property type="protein sequence ID" value="AT4G14785.1"/>
    <property type="gene ID" value="AT4G14785"/>
</dbReference>
<dbReference type="GeneID" id="3770162"/>
<dbReference type="Gramene" id="AT4G14785.1">
    <property type="protein sequence ID" value="AT4G14785.1"/>
    <property type="gene ID" value="AT4G14785"/>
</dbReference>
<dbReference type="KEGG" id="ath:AT4G14785"/>
<dbReference type="Araport" id="AT4G14785"/>
<dbReference type="TAIR" id="AT4G14785">
    <property type="gene designation" value="SCRL23"/>
</dbReference>
<dbReference type="HOGENOM" id="CLU_174283_0_0_1"/>
<dbReference type="InParanoid" id="P82642"/>
<dbReference type="OMA" id="VECWSEI"/>
<dbReference type="OrthoDB" id="1020577at2759"/>
<dbReference type="PhylomeDB" id="P82642"/>
<dbReference type="PRO" id="PR:P82642"/>
<dbReference type="Proteomes" id="UP000006548">
    <property type="component" value="Chromosome 4"/>
</dbReference>
<dbReference type="ExpressionAtlas" id="P82642">
    <property type="expression patterns" value="baseline"/>
</dbReference>
<dbReference type="GO" id="GO:0005576">
    <property type="term" value="C:extracellular region"/>
    <property type="evidence" value="ECO:0007669"/>
    <property type="project" value="UniProtKB-SubCell"/>
</dbReference>
<dbReference type="GO" id="GO:0050832">
    <property type="term" value="P:defense response to fungus"/>
    <property type="evidence" value="ECO:0007669"/>
    <property type="project" value="UniProtKB-KW"/>
</dbReference>
<dbReference type="GO" id="GO:0031640">
    <property type="term" value="P:killing of cells of another organism"/>
    <property type="evidence" value="ECO:0007669"/>
    <property type="project" value="UniProtKB-KW"/>
</dbReference>
<dbReference type="GO" id="GO:0007165">
    <property type="term" value="P:signal transduction"/>
    <property type="evidence" value="ECO:0007669"/>
    <property type="project" value="InterPro"/>
</dbReference>
<dbReference type="InterPro" id="IPR010682">
    <property type="entry name" value="SCRL"/>
</dbReference>
<dbReference type="PANTHER" id="PTHR34450:SF8">
    <property type="entry name" value="DEFENSIN-LIKE PROTEIN 232-RELATED"/>
    <property type="match status" value="1"/>
</dbReference>
<dbReference type="PANTHER" id="PTHR34450">
    <property type="entry name" value="DEFENSIN-LIKE PROTEIN 245-RELATED"/>
    <property type="match status" value="1"/>
</dbReference>
<dbReference type="Pfam" id="PF06876">
    <property type="entry name" value="SCRL"/>
    <property type="match status" value="1"/>
</dbReference>
<keyword id="KW-0929">Antimicrobial</keyword>
<keyword id="KW-1015">Disulfide bond</keyword>
<keyword id="KW-0295">Fungicide</keyword>
<keyword id="KW-0611">Plant defense</keyword>
<keyword id="KW-1185">Reference proteome</keyword>
<keyword id="KW-0964">Secreted</keyword>
<keyword id="KW-0732">Signal</keyword>
<organism evidence="4">
    <name type="scientific">Arabidopsis thaliana</name>
    <name type="common">Mouse-ear cress</name>
    <dbReference type="NCBI Taxonomy" id="3702"/>
    <lineage>
        <taxon>Eukaryota</taxon>
        <taxon>Viridiplantae</taxon>
        <taxon>Streptophyta</taxon>
        <taxon>Embryophyta</taxon>
        <taxon>Tracheophyta</taxon>
        <taxon>Spermatophyta</taxon>
        <taxon>Magnoliopsida</taxon>
        <taxon>eudicotyledons</taxon>
        <taxon>Gunneridae</taxon>
        <taxon>Pentapetalae</taxon>
        <taxon>rosids</taxon>
        <taxon>malvids</taxon>
        <taxon>Brassicales</taxon>
        <taxon>Brassicaceae</taxon>
        <taxon>Camelineae</taxon>
        <taxon>Arabidopsis</taxon>
    </lineage>
</organism>
<accession>P82642</accession>
<gene>
    <name type="primary">SCRL23</name>
    <name type="ordered locus">At4g14785</name>
    <name type="ORF">FCAALL</name>
</gene>
<evidence type="ECO:0000250" key="1"/>
<evidence type="ECO:0000255" key="2"/>
<evidence type="ECO:0000269" key="3">
    <source>
    </source>
</evidence>
<evidence type="ECO:0000305" key="4"/>
<proteinExistence type="evidence at transcript level"/>
<feature type="signal peptide" evidence="2">
    <location>
        <begin position="1"/>
        <end position="26"/>
    </location>
</feature>
<feature type="chain" id="PRO_0000031949" description="Defensin-like protein 232">
    <location>
        <begin position="27"/>
        <end position="95"/>
    </location>
</feature>
<feature type="disulfide bond" evidence="1">
    <location>
        <begin position="33"/>
        <end position="94"/>
    </location>
</feature>
<feature type="disulfide bond" evidence="1">
    <location>
        <begin position="43"/>
        <end position="68"/>
    </location>
</feature>
<feature type="disulfide bond" evidence="1">
    <location>
        <begin position="51"/>
        <end position="84"/>
    </location>
</feature>
<feature type="disulfide bond" evidence="1">
    <location>
        <begin position="66"/>
        <end position="86"/>
    </location>
</feature>
<sequence>MRCTTLIMVSFVVSCLLLSLVEESEAGAPPVECWSEILFSGKCGFHGKKKCYKEMESKLKQRVLKCRCEDVKKDSNTSKDEHYCGCQRENPYECN</sequence>
<protein>
    <recommendedName>
        <fullName>Defensin-like protein 232</fullName>
    </recommendedName>
    <alternativeName>
        <fullName>S locus cysteine-rich-like protein 23</fullName>
        <shortName>Protein SCRL23</shortName>
        <shortName>SCR-like protein 23</shortName>
    </alternativeName>
</protein>
<reference key="1">
    <citation type="journal article" date="1998" name="Nature">
        <title>Analysis of 1.9 Mb of contiguous sequence from chromosome 4 of Arabidopsis thaliana.</title>
        <authorList>
            <person name="Bevan M."/>
            <person name="Bancroft I."/>
            <person name="Bent E."/>
            <person name="Love K."/>
            <person name="Goodman H.M."/>
            <person name="Dean C."/>
            <person name="Bergkamp R."/>
            <person name="Dirkse W."/>
            <person name="van Staveren M."/>
            <person name="Stiekema W."/>
            <person name="Drost L."/>
            <person name="Ridley P."/>
            <person name="Hudson S.-A."/>
            <person name="Patel K."/>
            <person name="Murphy G."/>
            <person name="Piffanelli P."/>
            <person name="Wedler H."/>
            <person name="Wedler E."/>
            <person name="Wambutt R."/>
            <person name="Weitzenegger T."/>
            <person name="Pohl T."/>
            <person name="Terryn N."/>
            <person name="Gielen J."/>
            <person name="Villarroel R."/>
            <person name="De Clercq R."/>
            <person name="van Montagu M."/>
            <person name="Lecharny A."/>
            <person name="Aubourg S."/>
            <person name="Gy I."/>
            <person name="Kreis M."/>
            <person name="Lao N."/>
            <person name="Kavanagh T."/>
            <person name="Hempel S."/>
            <person name="Kotter P."/>
            <person name="Entian K.-D."/>
            <person name="Rieger M."/>
            <person name="Schaefer M."/>
            <person name="Funk B."/>
            <person name="Mueller-Auer S."/>
            <person name="Silvey M."/>
            <person name="James R."/>
            <person name="Monfort A."/>
            <person name="Pons A."/>
            <person name="Puigdomenech P."/>
            <person name="Douka A."/>
            <person name="Voukelatou E."/>
            <person name="Milioni D."/>
            <person name="Hatzopoulos P."/>
            <person name="Piravandi E."/>
            <person name="Obermaier B."/>
            <person name="Hilbert H."/>
            <person name="Duesterhoeft A."/>
            <person name="Moores T."/>
            <person name="Jones J.D.G."/>
            <person name="Eneva T."/>
            <person name="Palme K."/>
            <person name="Benes V."/>
            <person name="Rechmann S."/>
            <person name="Ansorge W."/>
            <person name="Cooke R."/>
            <person name="Berger C."/>
            <person name="Delseny M."/>
            <person name="Voet M."/>
            <person name="Volckaert G."/>
            <person name="Mewes H.-W."/>
            <person name="Klosterman S."/>
            <person name="Schueller C."/>
            <person name="Chalwatzis N."/>
        </authorList>
    </citation>
    <scope>NUCLEOTIDE SEQUENCE [LARGE SCALE GENOMIC DNA]</scope>
    <source>
        <strain>cv. Columbia</strain>
    </source>
</reference>
<reference evidence="4" key="2">
    <citation type="journal article" date="1999" name="Nature">
        <title>Sequence and analysis of chromosome 4 of the plant Arabidopsis thaliana.</title>
        <authorList>
            <person name="Mayer K.F.X."/>
            <person name="Schueller C."/>
            <person name="Wambutt R."/>
            <person name="Murphy G."/>
            <person name="Volckaert G."/>
            <person name="Pohl T."/>
            <person name="Duesterhoeft A."/>
            <person name="Stiekema W."/>
            <person name="Entian K.-D."/>
            <person name="Terryn N."/>
            <person name="Harris B."/>
            <person name="Ansorge W."/>
            <person name="Brandt P."/>
            <person name="Grivell L.A."/>
            <person name="Rieger M."/>
            <person name="Weichselgartner M."/>
            <person name="de Simone V."/>
            <person name="Obermaier B."/>
            <person name="Mache R."/>
            <person name="Mueller M."/>
            <person name="Kreis M."/>
            <person name="Delseny M."/>
            <person name="Puigdomenech P."/>
            <person name="Watson M."/>
            <person name="Schmidtheini T."/>
            <person name="Reichert B."/>
            <person name="Portetelle D."/>
            <person name="Perez-Alonso M."/>
            <person name="Boutry M."/>
            <person name="Bancroft I."/>
            <person name="Vos P."/>
            <person name="Hoheisel J."/>
            <person name="Zimmermann W."/>
            <person name="Wedler H."/>
            <person name="Ridley P."/>
            <person name="Langham S.-A."/>
            <person name="McCullagh B."/>
            <person name="Bilham L."/>
            <person name="Robben J."/>
            <person name="van der Schueren J."/>
            <person name="Grymonprez B."/>
            <person name="Chuang Y.-J."/>
            <person name="Vandenbussche F."/>
            <person name="Braeken M."/>
            <person name="Weltjens I."/>
            <person name="Voet M."/>
            <person name="Bastiaens I."/>
            <person name="Aert R."/>
            <person name="Defoor E."/>
            <person name="Weitzenegger T."/>
            <person name="Bothe G."/>
            <person name="Ramsperger U."/>
            <person name="Hilbert H."/>
            <person name="Braun M."/>
            <person name="Holzer E."/>
            <person name="Brandt A."/>
            <person name="Peters S."/>
            <person name="van Staveren M."/>
            <person name="Dirkse W."/>
            <person name="Mooijman P."/>
            <person name="Klein Lankhorst R."/>
            <person name="Rose M."/>
            <person name="Hauf J."/>
            <person name="Koetter P."/>
            <person name="Berneiser S."/>
            <person name="Hempel S."/>
            <person name="Feldpausch M."/>
            <person name="Lamberth S."/>
            <person name="Van den Daele H."/>
            <person name="De Keyser A."/>
            <person name="Buysshaert C."/>
            <person name="Gielen J."/>
            <person name="Villarroel R."/>
            <person name="De Clercq R."/>
            <person name="van Montagu M."/>
            <person name="Rogers J."/>
            <person name="Cronin A."/>
            <person name="Quail M.A."/>
            <person name="Bray-Allen S."/>
            <person name="Clark L."/>
            <person name="Doggett J."/>
            <person name="Hall S."/>
            <person name="Kay M."/>
            <person name="Lennard N."/>
            <person name="McLay K."/>
            <person name="Mayes R."/>
            <person name="Pettett A."/>
            <person name="Rajandream M.A."/>
            <person name="Lyne M."/>
            <person name="Benes V."/>
            <person name="Rechmann S."/>
            <person name="Borkova D."/>
            <person name="Bloecker H."/>
            <person name="Scharfe M."/>
            <person name="Grimm M."/>
            <person name="Loehnert T.-H."/>
            <person name="Dose S."/>
            <person name="de Haan M."/>
            <person name="Maarse A.C."/>
            <person name="Schaefer M."/>
            <person name="Mueller-Auer S."/>
            <person name="Gabel C."/>
            <person name="Fuchs M."/>
            <person name="Fartmann B."/>
            <person name="Granderath K."/>
            <person name="Dauner D."/>
            <person name="Herzl A."/>
            <person name="Neumann S."/>
            <person name="Argiriou A."/>
            <person name="Vitale D."/>
            <person name="Liguori R."/>
            <person name="Piravandi E."/>
            <person name="Massenet O."/>
            <person name="Quigley F."/>
            <person name="Clabauld G."/>
            <person name="Muendlein A."/>
            <person name="Felber R."/>
            <person name="Schnabl S."/>
            <person name="Hiller R."/>
            <person name="Schmidt W."/>
            <person name="Lecharny A."/>
            <person name="Aubourg S."/>
            <person name="Chefdor F."/>
            <person name="Cooke R."/>
            <person name="Berger C."/>
            <person name="Monfort A."/>
            <person name="Casacuberta E."/>
            <person name="Gibbons T."/>
            <person name="Weber N."/>
            <person name="Vandenbol M."/>
            <person name="Bargues M."/>
            <person name="Terol J."/>
            <person name="Torres A."/>
            <person name="Perez-Perez A."/>
            <person name="Purnelle B."/>
            <person name="Bent E."/>
            <person name="Johnson S."/>
            <person name="Tacon D."/>
            <person name="Jesse T."/>
            <person name="Heijnen L."/>
            <person name="Schwarz S."/>
            <person name="Scholler P."/>
            <person name="Heber S."/>
            <person name="Francs P."/>
            <person name="Bielke C."/>
            <person name="Frishman D."/>
            <person name="Haase D."/>
            <person name="Lemcke K."/>
            <person name="Mewes H.-W."/>
            <person name="Stocker S."/>
            <person name="Zaccaria P."/>
            <person name="Bevan M."/>
            <person name="Wilson R.K."/>
            <person name="de la Bastide M."/>
            <person name="Habermann K."/>
            <person name="Parnell L."/>
            <person name="Dedhia N."/>
            <person name="Gnoj L."/>
            <person name="Schutz K."/>
            <person name="Huang E."/>
            <person name="Spiegel L."/>
            <person name="Sekhon M."/>
            <person name="Murray J."/>
            <person name="Sheet P."/>
            <person name="Cordes M."/>
            <person name="Abu-Threideh J."/>
            <person name="Stoneking T."/>
            <person name="Kalicki J."/>
            <person name="Graves T."/>
            <person name="Harmon G."/>
            <person name="Edwards J."/>
            <person name="Latreille P."/>
            <person name="Courtney L."/>
            <person name="Cloud J."/>
            <person name="Abbott A."/>
            <person name="Scott K."/>
            <person name="Johnson D."/>
            <person name="Minx P."/>
            <person name="Bentley D."/>
            <person name="Fulton B."/>
            <person name="Miller N."/>
            <person name="Greco T."/>
            <person name="Kemp K."/>
            <person name="Kramer J."/>
            <person name="Fulton L."/>
            <person name="Mardis E."/>
            <person name="Dante M."/>
            <person name="Pepin K."/>
            <person name="Hillier L.W."/>
            <person name="Nelson J."/>
            <person name="Spieth J."/>
            <person name="Ryan E."/>
            <person name="Andrews S."/>
            <person name="Geisel C."/>
            <person name="Layman D."/>
            <person name="Du H."/>
            <person name="Ali J."/>
            <person name="Berghoff A."/>
            <person name="Jones K."/>
            <person name="Drone K."/>
            <person name="Cotton M."/>
            <person name="Joshu C."/>
            <person name="Antonoiu B."/>
            <person name="Zidanic M."/>
            <person name="Strong C."/>
            <person name="Sun H."/>
            <person name="Lamar B."/>
            <person name="Yordan C."/>
            <person name="Ma P."/>
            <person name="Zhong J."/>
            <person name="Preston R."/>
            <person name="Vil D."/>
            <person name="Shekher M."/>
            <person name="Matero A."/>
            <person name="Shah R."/>
            <person name="Swaby I.K."/>
            <person name="O'Shaughnessy A."/>
            <person name="Rodriguez M."/>
            <person name="Hoffman J."/>
            <person name="Till S."/>
            <person name="Granat S."/>
            <person name="Shohdy N."/>
            <person name="Hasegawa A."/>
            <person name="Hameed A."/>
            <person name="Lodhi M."/>
            <person name="Johnson A."/>
            <person name="Chen E."/>
            <person name="Marra M.A."/>
            <person name="Martienssen R."/>
            <person name="McCombie W.R."/>
        </authorList>
    </citation>
    <scope>NUCLEOTIDE SEQUENCE [LARGE SCALE GENOMIC DNA]</scope>
    <source>
        <strain>cv. Columbia</strain>
    </source>
</reference>
<reference key="3">
    <citation type="journal article" date="2017" name="Plant J.">
        <title>Araport11: a complete reannotation of the Arabidopsis thaliana reference genome.</title>
        <authorList>
            <person name="Cheng C.Y."/>
            <person name="Krishnakumar V."/>
            <person name="Chan A.P."/>
            <person name="Thibaud-Nissen F."/>
            <person name="Schobel S."/>
            <person name="Town C.D."/>
        </authorList>
    </citation>
    <scope>GENOME REANNOTATION</scope>
    <source>
        <strain>cv. Columbia</strain>
    </source>
</reference>
<reference evidence="4" key="4">
    <citation type="journal article" date="2001" name="Plant Mol. Biol.">
        <title>Two large Arabidopsis thaliana gene families are homologous to the Brassica gene superfamily that encodes pollen coat proteins and the male component of the self-incompatibility response.</title>
        <authorList>
            <person name="Vanoosthuyse V."/>
            <person name="Miege C."/>
            <person name="Dumas C."/>
            <person name="Cock J.M."/>
        </authorList>
    </citation>
    <scope>IDENTIFICATION</scope>
    <scope>TISSUE SPECIFICITY</scope>
</reference>
<reference key="5">
    <citation type="journal article" date="2005" name="Plant Physiol.">
        <title>Genome organization of more than 300 defensin-like genes in Arabidopsis.</title>
        <authorList>
            <person name="Silverstein K.A.T."/>
            <person name="Graham M.A."/>
            <person name="Paape T.D."/>
            <person name="VandenBosch K.A."/>
        </authorList>
    </citation>
    <scope>GENE FAMILY</scope>
</reference>
<name>DF232_ARATH</name>
<comment type="subcellular location">
    <subcellularLocation>
        <location evidence="1">Secreted</location>
    </subcellularLocation>
</comment>
<comment type="tissue specificity">
    <text evidence="3">Flower buds.</text>
</comment>
<comment type="similarity">
    <text evidence="4">Belongs to the DEFL family.</text>
</comment>